<evidence type="ECO:0000255" key="1">
    <source>
        <dbReference type="HAMAP-Rule" id="MF_00223"/>
    </source>
</evidence>
<proteinExistence type="inferred from homology"/>
<gene>
    <name evidence="1" type="primary">folE</name>
    <name type="ordered locus">SP70585_0350</name>
</gene>
<protein>
    <recommendedName>
        <fullName evidence="1">GTP cyclohydrolase 1</fullName>
        <ecNumber evidence="1">3.5.4.16</ecNumber>
    </recommendedName>
    <alternativeName>
        <fullName evidence="1">GTP cyclohydrolase I</fullName>
        <shortName evidence="1">GTP-CH-I</shortName>
    </alternativeName>
</protein>
<accession>C1CB65</accession>
<dbReference type="EC" id="3.5.4.16" evidence="1"/>
<dbReference type="EMBL" id="CP000918">
    <property type="protein sequence ID" value="ACO16106.1"/>
    <property type="molecule type" value="Genomic_DNA"/>
</dbReference>
<dbReference type="RefSeq" id="WP_000380916.1">
    <property type="nucleotide sequence ID" value="NC_012468.1"/>
</dbReference>
<dbReference type="SMR" id="C1CB65"/>
<dbReference type="GeneID" id="93738559"/>
<dbReference type="KEGG" id="snm:SP70585_0350"/>
<dbReference type="HOGENOM" id="CLU_049768_3_3_9"/>
<dbReference type="UniPathway" id="UPA00848">
    <property type="reaction ID" value="UER00151"/>
</dbReference>
<dbReference type="Proteomes" id="UP000002211">
    <property type="component" value="Chromosome"/>
</dbReference>
<dbReference type="GO" id="GO:0005737">
    <property type="term" value="C:cytoplasm"/>
    <property type="evidence" value="ECO:0007669"/>
    <property type="project" value="TreeGrafter"/>
</dbReference>
<dbReference type="GO" id="GO:0005525">
    <property type="term" value="F:GTP binding"/>
    <property type="evidence" value="ECO:0007669"/>
    <property type="project" value="UniProtKB-KW"/>
</dbReference>
<dbReference type="GO" id="GO:0003934">
    <property type="term" value="F:GTP cyclohydrolase I activity"/>
    <property type="evidence" value="ECO:0007669"/>
    <property type="project" value="UniProtKB-UniRule"/>
</dbReference>
<dbReference type="GO" id="GO:0008270">
    <property type="term" value="F:zinc ion binding"/>
    <property type="evidence" value="ECO:0007669"/>
    <property type="project" value="UniProtKB-UniRule"/>
</dbReference>
<dbReference type="GO" id="GO:0006730">
    <property type="term" value="P:one-carbon metabolic process"/>
    <property type="evidence" value="ECO:0007669"/>
    <property type="project" value="UniProtKB-UniRule"/>
</dbReference>
<dbReference type="GO" id="GO:0006729">
    <property type="term" value="P:tetrahydrobiopterin biosynthetic process"/>
    <property type="evidence" value="ECO:0007669"/>
    <property type="project" value="TreeGrafter"/>
</dbReference>
<dbReference type="GO" id="GO:0046654">
    <property type="term" value="P:tetrahydrofolate biosynthetic process"/>
    <property type="evidence" value="ECO:0007669"/>
    <property type="project" value="UniProtKB-UniRule"/>
</dbReference>
<dbReference type="CDD" id="cd00642">
    <property type="entry name" value="GTP_cyclohydro1"/>
    <property type="match status" value="1"/>
</dbReference>
<dbReference type="FunFam" id="1.10.286.10:FF:000001">
    <property type="entry name" value="GTP cyclohydrolase 1"/>
    <property type="match status" value="1"/>
</dbReference>
<dbReference type="FunFam" id="3.30.1130.10:FF:000001">
    <property type="entry name" value="GTP cyclohydrolase 1"/>
    <property type="match status" value="1"/>
</dbReference>
<dbReference type="Gene3D" id="1.10.286.10">
    <property type="match status" value="1"/>
</dbReference>
<dbReference type="Gene3D" id="3.30.1130.10">
    <property type="match status" value="1"/>
</dbReference>
<dbReference type="HAMAP" id="MF_00223">
    <property type="entry name" value="FolE"/>
    <property type="match status" value="1"/>
</dbReference>
<dbReference type="InterPro" id="IPR043133">
    <property type="entry name" value="GTP-CH-I_C/QueF"/>
</dbReference>
<dbReference type="InterPro" id="IPR043134">
    <property type="entry name" value="GTP-CH-I_N"/>
</dbReference>
<dbReference type="InterPro" id="IPR001474">
    <property type="entry name" value="GTP_CycHdrlase_I"/>
</dbReference>
<dbReference type="InterPro" id="IPR018234">
    <property type="entry name" value="GTP_CycHdrlase_I_CS"/>
</dbReference>
<dbReference type="InterPro" id="IPR020602">
    <property type="entry name" value="GTP_CycHdrlase_I_dom"/>
</dbReference>
<dbReference type="NCBIfam" id="TIGR00063">
    <property type="entry name" value="folE"/>
    <property type="match status" value="1"/>
</dbReference>
<dbReference type="NCBIfam" id="NF006825">
    <property type="entry name" value="PRK09347.1-2"/>
    <property type="match status" value="1"/>
</dbReference>
<dbReference type="NCBIfam" id="NF006826">
    <property type="entry name" value="PRK09347.1-3"/>
    <property type="match status" value="1"/>
</dbReference>
<dbReference type="PANTHER" id="PTHR11109:SF7">
    <property type="entry name" value="GTP CYCLOHYDROLASE 1"/>
    <property type="match status" value="1"/>
</dbReference>
<dbReference type="PANTHER" id="PTHR11109">
    <property type="entry name" value="GTP CYCLOHYDROLASE I"/>
    <property type="match status" value="1"/>
</dbReference>
<dbReference type="Pfam" id="PF01227">
    <property type="entry name" value="GTP_cyclohydroI"/>
    <property type="match status" value="1"/>
</dbReference>
<dbReference type="SUPFAM" id="SSF55620">
    <property type="entry name" value="Tetrahydrobiopterin biosynthesis enzymes-like"/>
    <property type="match status" value="1"/>
</dbReference>
<dbReference type="PROSITE" id="PS00859">
    <property type="entry name" value="GTP_CYCLOHYDROL_1_1"/>
    <property type="match status" value="1"/>
</dbReference>
<dbReference type="PROSITE" id="PS00860">
    <property type="entry name" value="GTP_CYCLOHYDROL_1_2"/>
    <property type="match status" value="1"/>
</dbReference>
<feature type="chain" id="PRO_1000124928" description="GTP cyclohydrolase 1">
    <location>
        <begin position="1"/>
        <end position="184"/>
    </location>
</feature>
<feature type="binding site" evidence="1">
    <location>
        <position position="75"/>
    </location>
    <ligand>
        <name>Zn(2+)</name>
        <dbReference type="ChEBI" id="CHEBI:29105"/>
    </ligand>
</feature>
<feature type="binding site" evidence="1">
    <location>
        <position position="78"/>
    </location>
    <ligand>
        <name>Zn(2+)</name>
        <dbReference type="ChEBI" id="CHEBI:29105"/>
    </ligand>
</feature>
<feature type="binding site" evidence="1">
    <location>
        <position position="146"/>
    </location>
    <ligand>
        <name>Zn(2+)</name>
        <dbReference type="ChEBI" id="CHEBI:29105"/>
    </ligand>
</feature>
<comment type="catalytic activity">
    <reaction evidence="1">
        <text>GTP + H2O = 7,8-dihydroneopterin 3'-triphosphate + formate + H(+)</text>
        <dbReference type="Rhea" id="RHEA:17473"/>
        <dbReference type="ChEBI" id="CHEBI:15377"/>
        <dbReference type="ChEBI" id="CHEBI:15378"/>
        <dbReference type="ChEBI" id="CHEBI:15740"/>
        <dbReference type="ChEBI" id="CHEBI:37565"/>
        <dbReference type="ChEBI" id="CHEBI:58462"/>
        <dbReference type="EC" id="3.5.4.16"/>
    </reaction>
</comment>
<comment type="pathway">
    <text evidence="1">Cofactor biosynthesis; 7,8-dihydroneopterin triphosphate biosynthesis; 7,8-dihydroneopterin triphosphate from GTP: step 1/1.</text>
</comment>
<comment type="subunit">
    <text evidence="1">Homomer.</text>
</comment>
<comment type="similarity">
    <text evidence="1">Belongs to the GTP cyclohydrolase I family.</text>
</comment>
<reference key="1">
    <citation type="journal article" date="2010" name="Genome Biol.">
        <title>Structure and dynamics of the pan-genome of Streptococcus pneumoniae and closely related species.</title>
        <authorList>
            <person name="Donati C."/>
            <person name="Hiller N.L."/>
            <person name="Tettelin H."/>
            <person name="Muzzi A."/>
            <person name="Croucher N.J."/>
            <person name="Angiuoli S.V."/>
            <person name="Oggioni M."/>
            <person name="Dunning Hotopp J.C."/>
            <person name="Hu F.Z."/>
            <person name="Riley D.R."/>
            <person name="Covacci A."/>
            <person name="Mitchell T.J."/>
            <person name="Bentley S.D."/>
            <person name="Kilian M."/>
            <person name="Ehrlich G.D."/>
            <person name="Rappuoli R."/>
            <person name="Moxon E.R."/>
            <person name="Masignani V."/>
        </authorList>
    </citation>
    <scope>NUCLEOTIDE SEQUENCE [LARGE SCALE GENOMIC DNA]</scope>
    <source>
        <strain>70585</strain>
    </source>
</reference>
<sequence>MDTQKIEAAVKMIIEAVGEDANREGLQETPARVARMYQEIFSGLGQTAEEHLSKSFEIIDDNMVVEKDIFFHTMCEHHFLPFYGRAHIAYIPDGRVAGLSKLARTVEVYSKKPQIQERLNIEVADALMDYLGAKGAFVVIEAEHMCMSMRGVRKPGTATLTTVARGLFETDKDLRDQAYRLMGL</sequence>
<name>GCH1_STRP7</name>
<keyword id="KW-0342">GTP-binding</keyword>
<keyword id="KW-0378">Hydrolase</keyword>
<keyword id="KW-0479">Metal-binding</keyword>
<keyword id="KW-0547">Nucleotide-binding</keyword>
<keyword id="KW-0554">One-carbon metabolism</keyword>
<keyword id="KW-0862">Zinc</keyword>
<organism>
    <name type="scientific">Streptococcus pneumoniae (strain 70585)</name>
    <dbReference type="NCBI Taxonomy" id="488221"/>
    <lineage>
        <taxon>Bacteria</taxon>
        <taxon>Bacillati</taxon>
        <taxon>Bacillota</taxon>
        <taxon>Bacilli</taxon>
        <taxon>Lactobacillales</taxon>
        <taxon>Streptococcaceae</taxon>
        <taxon>Streptococcus</taxon>
    </lineage>
</organism>